<feature type="transit peptide" description="Chloroplast" evidence="1">
    <location>
        <begin position="1"/>
        <end position="55"/>
    </location>
</feature>
<feature type="chain" id="PRO_0000290214" description="Probable plastid-lipid-associated protein 12, chloroplastic">
    <location>
        <begin position="56"/>
        <end position="409"/>
    </location>
</feature>
<keyword id="KW-0150">Chloroplast</keyword>
<keyword id="KW-0934">Plastid</keyword>
<keyword id="KW-1185">Reference proteome</keyword>
<keyword id="KW-0793">Thylakoid</keyword>
<keyword id="KW-0809">Transit peptide</keyword>
<comment type="subcellular location">
    <subcellularLocation>
        <location evidence="2">Plastid</location>
        <location evidence="2">Chloroplast thylakoid</location>
    </subcellularLocation>
    <text evidence="2">Located in thylakoid as a peripheral protein at the stromal side.</text>
</comment>
<comment type="similarity">
    <text evidence="3">Belongs to the PAP/fibrillin family.</text>
</comment>
<comment type="sequence caution" evidence="3">
    <conflict type="erroneous gene model prediction">
        <sequence resource="EMBL-CDS" id="AAG50539"/>
    </conflict>
    <text>Was originally thought to correspond to two different genes At1g51110 and At1g51115.</text>
</comment>
<comment type="sequence caution" evidence="3">
    <conflict type="erroneous gene model prediction">
        <sequence resource="EMBL-CDS" id="AAG50542"/>
    </conflict>
    <text>Was originally thought to correspond to two different genes At1g51110 and At1g51115.</text>
</comment>
<proteinExistence type="evidence at protein level"/>
<dbReference type="EMBL" id="AC079828">
    <property type="protein sequence ID" value="AAG50539.1"/>
    <property type="status" value="ALT_SEQ"/>
    <property type="molecule type" value="Genomic_DNA"/>
</dbReference>
<dbReference type="EMBL" id="AC079828">
    <property type="protein sequence ID" value="AAG50542.1"/>
    <property type="status" value="ALT_SEQ"/>
    <property type="molecule type" value="Genomic_DNA"/>
</dbReference>
<dbReference type="EMBL" id="CP002684">
    <property type="protein sequence ID" value="AEE32623.1"/>
    <property type="molecule type" value="Genomic_DNA"/>
</dbReference>
<dbReference type="EMBL" id="AK118545">
    <property type="protein sequence ID" value="BAC43147.1"/>
    <property type="molecule type" value="mRNA"/>
</dbReference>
<dbReference type="EMBL" id="BT005347">
    <property type="protein sequence ID" value="AAO63411.1"/>
    <property type="molecule type" value="mRNA"/>
</dbReference>
<dbReference type="EMBL" id="AY087688">
    <property type="protein sequence ID" value="AAM65225.1"/>
    <property type="molecule type" value="mRNA"/>
</dbReference>
<dbReference type="PIR" id="D96548">
    <property type="entry name" value="D96548"/>
</dbReference>
<dbReference type="PIR" id="E96548">
    <property type="entry name" value="E96548"/>
</dbReference>
<dbReference type="RefSeq" id="NP_175522.2">
    <property type="nucleotide sequence ID" value="NM_103989.5"/>
</dbReference>
<dbReference type="FunCoup" id="Q8LAP6">
    <property type="interactions" value="1455"/>
</dbReference>
<dbReference type="STRING" id="3702.Q8LAP6"/>
<dbReference type="iPTMnet" id="Q8LAP6"/>
<dbReference type="PaxDb" id="3702-AT1G51110.1"/>
<dbReference type="ProteomicsDB" id="236838"/>
<dbReference type="EnsemblPlants" id="AT1G51110.1">
    <property type="protein sequence ID" value="AT1G51110.1"/>
    <property type="gene ID" value="AT1G51110"/>
</dbReference>
<dbReference type="Gramene" id="AT1G51110.1">
    <property type="protein sequence ID" value="AT1G51110.1"/>
    <property type="gene ID" value="AT1G51110"/>
</dbReference>
<dbReference type="KEGG" id="ath:AT1G51110"/>
<dbReference type="Araport" id="AT1G51110"/>
<dbReference type="TAIR" id="AT1G51110">
    <property type="gene designation" value="FBN10"/>
</dbReference>
<dbReference type="eggNOG" id="ENOG502QUCQ">
    <property type="taxonomic scope" value="Eukaryota"/>
</dbReference>
<dbReference type="HOGENOM" id="CLU_054473_1_0_1"/>
<dbReference type="InParanoid" id="Q8LAP6"/>
<dbReference type="OMA" id="NINQHKL"/>
<dbReference type="OrthoDB" id="348976at2759"/>
<dbReference type="PRO" id="PR:Q8LAP6"/>
<dbReference type="Proteomes" id="UP000006548">
    <property type="component" value="Chromosome 1"/>
</dbReference>
<dbReference type="ExpressionAtlas" id="Q8LAP6">
    <property type="expression patterns" value="baseline and differential"/>
</dbReference>
<dbReference type="GO" id="GO:0009507">
    <property type="term" value="C:chloroplast"/>
    <property type="evidence" value="ECO:0007005"/>
    <property type="project" value="TAIR"/>
</dbReference>
<dbReference type="GO" id="GO:0009941">
    <property type="term" value="C:chloroplast envelope"/>
    <property type="evidence" value="ECO:0007005"/>
    <property type="project" value="TAIR"/>
</dbReference>
<dbReference type="GO" id="GO:0009534">
    <property type="term" value="C:chloroplast thylakoid"/>
    <property type="evidence" value="ECO:0007005"/>
    <property type="project" value="TAIR"/>
</dbReference>
<dbReference type="GO" id="GO:0009535">
    <property type="term" value="C:chloroplast thylakoid membrane"/>
    <property type="evidence" value="ECO:0007005"/>
    <property type="project" value="TAIR"/>
</dbReference>
<dbReference type="GO" id="GO:0005634">
    <property type="term" value="C:nucleus"/>
    <property type="evidence" value="ECO:0007005"/>
    <property type="project" value="TAIR"/>
</dbReference>
<dbReference type="InterPro" id="IPR039633">
    <property type="entry name" value="PAP"/>
</dbReference>
<dbReference type="InterPro" id="IPR006843">
    <property type="entry name" value="PAP/fibrillin_dom"/>
</dbReference>
<dbReference type="PANTHER" id="PTHR31906">
    <property type="entry name" value="PLASTID-LIPID-ASSOCIATED PROTEIN 4, CHLOROPLASTIC-RELATED"/>
    <property type="match status" value="1"/>
</dbReference>
<dbReference type="Pfam" id="PF04755">
    <property type="entry name" value="PAP_fibrillin"/>
    <property type="match status" value="1"/>
</dbReference>
<evidence type="ECO:0000255" key="1"/>
<evidence type="ECO:0000269" key="2">
    <source>
    </source>
</evidence>
<evidence type="ECO:0000305" key="3"/>
<organism>
    <name type="scientific">Arabidopsis thaliana</name>
    <name type="common">Mouse-ear cress</name>
    <dbReference type="NCBI Taxonomy" id="3702"/>
    <lineage>
        <taxon>Eukaryota</taxon>
        <taxon>Viridiplantae</taxon>
        <taxon>Streptophyta</taxon>
        <taxon>Embryophyta</taxon>
        <taxon>Tracheophyta</taxon>
        <taxon>Spermatophyta</taxon>
        <taxon>Magnoliopsida</taxon>
        <taxon>eudicotyledons</taxon>
        <taxon>Gunneridae</taxon>
        <taxon>Pentapetalae</taxon>
        <taxon>rosids</taxon>
        <taxon>malvids</taxon>
        <taxon>Brassicales</taxon>
        <taxon>Brassicaceae</taxon>
        <taxon>Camelineae</taxon>
        <taxon>Arabidopsis</taxon>
    </lineage>
</organism>
<gene>
    <name type="primary">PAP12</name>
    <name type="synonym">FBN10</name>
    <name type="synonym">FIB10</name>
    <name type="ordered locus">At1g51110/At1g51115</name>
    <name type="ORF">F23H24.16/F23H24.17</name>
</gene>
<name>PAP12_ARATH</name>
<accession>Q8LAP6</accession>
<accession>Q9C686</accession>
<accession>Q9C687</accession>
<reference key="1">
    <citation type="journal article" date="2000" name="Nature">
        <title>Sequence and analysis of chromosome 1 of the plant Arabidopsis thaliana.</title>
        <authorList>
            <person name="Theologis A."/>
            <person name="Ecker J.R."/>
            <person name="Palm C.J."/>
            <person name="Federspiel N.A."/>
            <person name="Kaul S."/>
            <person name="White O."/>
            <person name="Alonso J."/>
            <person name="Altafi H."/>
            <person name="Araujo R."/>
            <person name="Bowman C.L."/>
            <person name="Brooks S.Y."/>
            <person name="Buehler E."/>
            <person name="Chan A."/>
            <person name="Chao Q."/>
            <person name="Chen H."/>
            <person name="Cheuk R.F."/>
            <person name="Chin C.W."/>
            <person name="Chung M.K."/>
            <person name="Conn L."/>
            <person name="Conway A.B."/>
            <person name="Conway A.R."/>
            <person name="Creasy T.H."/>
            <person name="Dewar K."/>
            <person name="Dunn P."/>
            <person name="Etgu P."/>
            <person name="Feldblyum T.V."/>
            <person name="Feng J.-D."/>
            <person name="Fong B."/>
            <person name="Fujii C.Y."/>
            <person name="Gill J.E."/>
            <person name="Goldsmith A.D."/>
            <person name="Haas B."/>
            <person name="Hansen N.F."/>
            <person name="Hughes B."/>
            <person name="Huizar L."/>
            <person name="Hunter J.L."/>
            <person name="Jenkins J."/>
            <person name="Johnson-Hopson C."/>
            <person name="Khan S."/>
            <person name="Khaykin E."/>
            <person name="Kim C.J."/>
            <person name="Koo H.L."/>
            <person name="Kremenetskaia I."/>
            <person name="Kurtz D.B."/>
            <person name="Kwan A."/>
            <person name="Lam B."/>
            <person name="Langin-Hooper S."/>
            <person name="Lee A."/>
            <person name="Lee J.M."/>
            <person name="Lenz C.A."/>
            <person name="Li J.H."/>
            <person name="Li Y.-P."/>
            <person name="Lin X."/>
            <person name="Liu S.X."/>
            <person name="Liu Z.A."/>
            <person name="Luros J.S."/>
            <person name="Maiti R."/>
            <person name="Marziali A."/>
            <person name="Militscher J."/>
            <person name="Miranda M."/>
            <person name="Nguyen M."/>
            <person name="Nierman W.C."/>
            <person name="Osborne B.I."/>
            <person name="Pai G."/>
            <person name="Peterson J."/>
            <person name="Pham P.K."/>
            <person name="Rizzo M."/>
            <person name="Rooney T."/>
            <person name="Rowley D."/>
            <person name="Sakano H."/>
            <person name="Salzberg S.L."/>
            <person name="Schwartz J.R."/>
            <person name="Shinn P."/>
            <person name="Southwick A.M."/>
            <person name="Sun H."/>
            <person name="Tallon L.J."/>
            <person name="Tambunga G."/>
            <person name="Toriumi M.J."/>
            <person name="Town C.D."/>
            <person name="Utterback T."/>
            <person name="Van Aken S."/>
            <person name="Vaysberg M."/>
            <person name="Vysotskaia V.S."/>
            <person name="Walker M."/>
            <person name="Wu D."/>
            <person name="Yu G."/>
            <person name="Fraser C.M."/>
            <person name="Venter J.C."/>
            <person name="Davis R.W."/>
        </authorList>
    </citation>
    <scope>NUCLEOTIDE SEQUENCE [LARGE SCALE GENOMIC DNA]</scope>
    <source>
        <strain>cv. Columbia</strain>
    </source>
</reference>
<reference key="2">
    <citation type="journal article" date="2017" name="Plant J.">
        <title>Araport11: a complete reannotation of the Arabidopsis thaliana reference genome.</title>
        <authorList>
            <person name="Cheng C.Y."/>
            <person name="Krishnakumar V."/>
            <person name="Chan A.P."/>
            <person name="Thibaud-Nissen F."/>
            <person name="Schobel S."/>
            <person name="Town C.D."/>
        </authorList>
    </citation>
    <scope>GENOME REANNOTATION</scope>
    <source>
        <strain>cv. Columbia</strain>
    </source>
</reference>
<reference key="3">
    <citation type="journal article" date="2002" name="Science">
        <title>Functional annotation of a full-length Arabidopsis cDNA collection.</title>
        <authorList>
            <person name="Seki M."/>
            <person name="Narusaka M."/>
            <person name="Kamiya A."/>
            <person name="Ishida J."/>
            <person name="Satou M."/>
            <person name="Sakurai T."/>
            <person name="Nakajima M."/>
            <person name="Enju A."/>
            <person name="Akiyama K."/>
            <person name="Oono Y."/>
            <person name="Muramatsu M."/>
            <person name="Hayashizaki Y."/>
            <person name="Kawai J."/>
            <person name="Carninci P."/>
            <person name="Itoh M."/>
            <person name="Ishii Y."/>
            <person name="Arakawa T."/>
            <person name="Shibata K."/>
            <person name="Shinagawa A."/>
            <person name="Shinozaki K."/>
        </authorList>
    </citation>
    <scope>NUCLEOTIDE SEQUENCE [LARGE SCALE MRNA]</scope>
    <source>
        <strain>cv. Columbia</strain>
    </source>
</reference>
<reference key="4">
    <citation type="journal article" date="2003" name="Science">
        <title>Empirical analysis of transcriptional activity in the Arabidopsis genome.</title>
        <authorList>
            <person name="Yamada K."/>
            <person name="Lim J."/>
            <person name="Dale J.M."/>
            <person name="Chen H."/>
            <person name="Shinn P."/>
            <person name="Palm C.J."/>
            <person name="Southwick A.M."/>
            <person name="Wu H.C."/>
            <person name="Kim C.J."/>
            <person name="Nguyen M."/>
            <person name="Pham P.K."/>
            <person name="Cheuk R.F."/>
            <person name="Karlin-Newmann G."/>
            <person name="Liu S.X."/>
            <person name="Lam B."/>
            <person name="Sakano H."/>
            <person name="Wu T."/>
            <person name="Yu G."/>
            <person name="Miranda M."/>
            <person name="Quach H.L."/>
            <person name="Tripp M."/>
            <person name="Chang C.H."/>
            <person name="Lee J.M."/>
            <person name="Toriumi M.J."/>
            <person name="Chan M.M."/>
            <person name="Tang C.C."/>
            <person name="Onodera C.S."/>
            <person name="Deng J.M."/>
            <person name="Akiyama K."/>
            <person name="Ansari Y."/>
            <person name="Arakawa T."/>
            <person name="Banh J."/>
            <person name="Banno F."/>
            <person name="Bowser L."/>
            <person name="Brooks S.Y."/>
            <person name="Carninci P."/>
            <person name="Chao Q."/>
            <person name="Choy N."/>
            <person name="Enju A."/>
            <person name="Goldsmith A.D."/>
            <person name="Gurjal M."/>
            <person name="Hansen N.F."/>
            <person name="Hayashizaki Y."/>
            <person name="Johnson-Hopson C."/>
            <person name="Hsuan V.W."/>
            <person name="Iida K."/>
            <person name="Karnes M."/>
            <person name="Khan S."/>
            <person name="Koesema E."/>
            <person name="Ishida J."/>
            <person name="Jiang P.X."/>
            <person name="Jones T."/>
            <person name="Kawai J."/>
            <person name="Kamiya A."/>
            <person name="Meyers C."/>
            <person name="Nakajima M."/>
            <person name="Narusaka M."/>
            <person name="Seki M."/>
            <person name="Sakurai T."/>
            <person name="Satou M."/>
            <person name="Tamse R."/>
            <person name="Vaysberg M."/>
            <person name="Wallender E.K."/>
            <person name="Wong C."/>
            <person name="Yamamura Y."/>
            <person name="Yuan S."/>
            <person name="Shinozaki K."/>
            <person name="Davis R.W."/>
            <person name="Theologis A."/>
            <person name="Ecker J.R."/>
        </authorList>
    </citation>
    <scope>NUCLEOTIDE SEQUENCE [LARGE SCALE MRNA]</scope>
    <source>
        <strain>cv. Columbia</strain>
    </source>
</reference>
<reference key="5">
    <citation type="submission" date="2002-03" db="EMBL/GenBank/DDBJ databases">
        <title>Full-length cDNA from Arabidopsis thaliana.</title>
        <authorList>
            <person name="Brover V.V."/>
            <person name="Troukhan M.E."/>
            <person name="Alexandrov N.A."/>
            <person name="Lu Y.-P."/>
            <person name="Flavell R.B."/>
            <person name="Feldmann K.A."/>
        </authorList>
    </citation>
    <scope>NUCLEOTIDE SEQUENCE [LARGE SCALE MRNA]</scope>
</reference>
<reference key="6">
    <citation type="journal article" date="2011" name="Trends Plant Sci.">
        <title>Fibrillin protein function: the tip of the iceberg?</title>
        <authorList>
            <person name="Singh D.K."/>
            <person name="McNellis T.W."/>
        </authorList>
    </citation>
    <scope>GENE FAMILY</scope>
    <scope>NOMENCLATURE</scope>
</reference>
<reference key="7">
    <citation type="journal article" date="2012" name="Plant Physiol.">
        <title>The functional network of the Arabidopsis plastoglobule proteome based on quantitative proteomics and genome-wide coexpression analysis.</title>
        <authorList>
            <person name="Lundquist P.K."/>
            <person name="Poliakov A."/>
            <person name="Bhuiyan N.H."/>
            <person name="Zybailov B."/>
            <person name="Sun Q."/>
            <person name="van Wijk K.J."/>
        </authorList>
    </citation>
    <scope>IDENTIFICATION BY MASS SPECTROMETRY</scope>
    <scope>SUBCELLULAR LOCATION [LARGE SCALE ANALYSIS]</scope>
    <source>
        <strain>cv. Columbia</strain>
    </source>
</reference>
<protein>
    <recommendedName>
        <fullName>Probable plastid-lipid-associated protein 12, chloroplastic</fullName>
    </recommendedName>
    <alternativeName>
        <fullName>Fibrillin-10</fullName>
    </alternativeName>
</protein>
<sequence>MVAVRFYAVEMSLPCLCPCPSSPISLSLCSPRFNLLNTTSRRLGLSRNCRTLRISCSSSSTVTDQTQQSSFNDAELKLIDALIGIQGRGKSASPKQLNDVESAVKVLEGLEGIQNPTDSDLIEGRWRLMFTTRPGTASPIQRTFTGVDVFTVFQDVYLKATNDPRVSNIVKFSDFIGELKVEAVASIKDGKRVLFRFDRAAFDLKFLPFKVPYPVPFRLLGDEAKGWLDTTYLSPSGNLRISRGNKGTTFVLQKETVPRQKLLATISQDKGVAEAIDEFLASNSNSAEDNYELLEGSWQMIWSSQMYTDSWIENAANGLMGRQIIEKDGRIKFEVNIIPAFRFSMKGKFIKSESSTYDLKMDDAAIIGGAFGYPVDITNNIELKILYTDEKMRISRGFDNIIFVHIREI</sequence>